<evidence type="ECO:0000255" key="1">
    <source>
        <dbReference type="HAMAP-Rule" id="MF_00380"/>
    </source>
</evidence>
<name>IHFA_THISH</name>
<dbReference type="EMBL" id="CP001339">
    <property type="protein sequence ID" value="ACL72540.1"/>
    <property type="molecule type" value="Genomic_DNA"/>
</dbReference>
<dbReference type="RefSeq" id="WP_012638023.1">
    <property type="nucleotide sequence ID" value="NC_011901.1"/>
</dbReference>
<dbReference type="SMR" id="B8GRI6"/>
<dbReference type="STRING" id="396588.Tgr7_1456"/>
<dbReference type="KEGG" id="tgr:Tgr7_1456"/>
<dbReference type="eggNOG" id="COG0776">
    <property type="taxonomic scope" value="Bacteria"/>
</dbReference>
<dbReference type="HOGENOM" id="CLU_105066_1_3_6"/>
<dbReference type="OrthoDB" id="9797747at2"/>
<dbReference type="Proteomes" id="UP000002383">
    <property type="component" value="Chromosome"/>
</dbReference>
<dbReference type="GO" id="GO:0005829">
    <property type="term" value="C:cytosol"/>
    <property type="evidence" value="ECO:0007669"/>
    <property type="project" value="TreeGrafter"/>
</dbReference>
<dbReference type="GO" id="GO:0003677">
    <property type="term" value="F:DNA binding"/>
    <property type="evidence" value="ECO:0007669"/>
    <property type="project" value="UniProtKB-UniRule"/>
</dbReference>
<dbReference type="GO" id="GO:0030527">
    <property type="term" value="F:structural constituent of chromatin"/>
    <property type="evidence" value="ECO:0007669"/>
    <property type="project" value="InterPro"/>
</dbReference>
<dbReference type="GO" id="GO:0006310">
    <property type="term" value="P:DNA recombination"/>
    <property type="evidence" value="ECO:0007669"/>
    <property type="project" value="UniProtKB-UniRule"/>
</dbReference>
<dbReference type="GO" id="GO:0009893">
    <property type="term" value="P:positive regulation of metabolic process"/>
    <property type="evidence" value="ECO:0007669"/>
    <property type="project" value="UniProtKB-ARBA"/>
</dbReference>
<dbReference type="GO" id="GO:0006355">
    <property type="term" value="P:regulation of DNA-templated transcription"/>
    <property type="evidence" value="ECO:0007669"/>
    <property type="project" value="UniProtKB-UniRule"/>
</dbReference>
<dbReference type="GO" id="GO:0006417">
    <property type="term" value="P:regulation of translation"/>
    <property type="evidence" value="ECO:0007669"/>
    <property type="project" value="UniProtKB-UniRule"/>
</dbReference>
<dbReference type="CDD" id="cd13835">
    <property type="entry name" value="IHF_A"/>
    <property type="match status" value="1"/>
</dbReference>
<dbReference type="FunFam" id="4.10.520.10:FF:000002">
    <property type="entry name" value="Integration host factor subunit alpha"/>
    <property type="match status" value="1"/>
</dbReference>
<dbReference type="Gene3D" id="4.10.520.10">
    <property type="entry name" value="IHF-like DNA-binding proteins"/>
    <property type="match status" value="1"/>
</dbReference>
<dbReference type="HAMAP" id="MF_00380">
    <property type="entry name" value="IHF_alpha"/>
    <property type="match status" value="1"/>
</dbReference>
<dbReference type="InterPro" id="IPR000119">
    <property type="entry name" value="Hist_DNA-bd"/>
</dbReference>
<dbReference type="InterPro" id="IPR020816">
    <property type="entry name" value="Histone-like_DNA-bd_CS"/>
</dbReference>
<dbReference type="InterPro" id="IPR010992">
    <property type="entry name" value="IHF-like_DNA-bd_dom_sf"/>
</dbReference>
<dbReference type="InterPro" id="IPR005684">
    <property type="entry name" value="IHF_alpha"/>
</dbReference>
<dbReference type="NCBIfam" id="TIGR00987">
    <property type="entry name" value="himA"/>
    <property type="match status" value="1"/>
</dbReference>
<dbReference type="NCBIfam" id="NF001401">
    <property type="entry name" value="PRK00285.1"/>
    <property type="match status" value="1"/>
</dbReference>
<dbReference type="PANTHER" id="PTHR33175">
    <property type="entry name" value="DNA-BINDING PROTEIN HU"/>
    <property type="match status" value="1"/>
</dbReference>
<dbReference type="PANTHER" id="PTHR33175:SF2">
    <property type="entry name" value="INTEGRATION HOST FACTOR SUBUNIT ALPHA"/>
    <property type="match status" value="1"/>
</dbReference>
<dbReference type="Pfam" id="PF00216">
    <property type="entry name" value="Bac_DNA_binding"/>
    <property type="match status" value="1"/>
</dbReference>
<dbReference type="PRINTS" id="PR01727">
    <property type="entry name" value="DNABINDINGHU"/>
</dbReference>
<dbReference type="SMART" id="SM00411">
    <property type="entry name" value="BHL"/>
    <property type="match status" value="1"/>
</dbReference>
<dbReference type="SUPFAM" id="SSF47729">
    <property type="entry name" value="IHF-like DNA-binding proteins"/>
    <property type="match status" value="1"/>
</dbReference>
<dbReference type="PROSITE" id="PS00045">
    <property type="entry name" value="HISTONE_LIKE"/>
    <property type="match status" value="1"/>
</dbReference>
<proteinExistence type="inferred from homology"/>
<gene>
    <name evidence="1" type="primary">ihfA</name>
    <name evidence="1" type="synonym">himA</name>
    <name type="ordered locus">Tgr7_1456</name>
</gene>
<comment type="function">
    <text evidence="1">This protein is one of the two subunits of integration host factor, a specific DNA-binding protein that functions in genetic recombination as well as in transcriptional and translational control.</text>
</comment>
<comment type="subunit">
    <text evidence="1">Heterodimer of an alpha and a beta chain.</text>
</comment>
<comment type="similarity">
    <text evidence="1">Belongs to the bacterial histone-like protein family.</text>
</comment>
<sequence length="99" mass="11302">MALTKADMSERLFEELGLNKREAKELVEMFFEEVRMALERGEQVKLSGFGNFTLRDKNQRPGRNPKTGEEIPISARRVVTFRPGQKLKARVEAYVGSGE</sequence>
<keyword id="KW-0233">DNA recombination</keyword>
<keyword id="KW-0238">DNA-binding</keyword>
<keyword id="KW-1185">Reference proteome</keyword>
<keyword id="KW-0804">Transcription</keyword>
<keyword id="KW-0805">Transcription regulation</keyword>
<keyword id="KW-0810">Translation regulation</keyword>
<protein>
    <recommendedName>
        <fullName evidence="1">Integration host factor subunit alpha</fullName>
        <shortName evidence="1">IHF-alpha</shortName>
    </recommendedName>
</protein>
<organism>
    <name type="scientific">Thioalkalivibrio sulfidiphilus (strain HL-EbGR7)</name>
    <dbReference type="NCBI Taxonomy" id="396588"/>
    <lineage>
        <taxon>Bacteria</taxon>
        <taxon>Pseudomonadati</taxon>
        <taxon>Pseudomonadota</taxon>
        <taxon>Gammaproteobacteria</taxon>
        <taxon>Chromatiales</taxon>
        <taxon>Ectothiorhodospiraceae</taxon>
        <taxon>Thioalkalivibrio</taxon>
    </lineage>
</organism>
<reference key="1">
    <citation type="journal article" date="2011" name="Stand. Genomic Sci.">
        <title>Complete genome sequence of 'Thioalkalivibrio sulfidophilus' HL-EbGr7.</title>
        <authorList>
            <person name="Muyzer G."/>
            <person name="Sorokin D.Y."/>
            <person name="Mavromatis K."/>
            <person name="Lapidus A."/>
            <person name="Clum A."/>
            <person name="Ivanova N."/>
            <person name="Pati A."/>
            <person name="d'Haeseleer P."/>
            <person name="Woyke T."/>
            <person name="Kyrpides N.C."/>
        </authorList>
    </citation>
    <scope>NUCLEOTIDE SEQUENCE [LARGE SCALE GENOMIC DNA]</scope>
    <source>
        <strain>HL-EbGR7</strain>
    </source>
</reference>
<feature type="chain" id="PRO_1000190430" description="Integration host factor subunit alpha">
    <location>
        <begin position="1"/>
        <end position="99"/>
    </location>
</feature>
<accession>B8GRI6</accession>